<geneLocation type="mitochondrion"/>
<accession>Q70RR5</accession>
<keyword id="KW-0249">Electron transport</keyword>
<keyword id="KW-0472">Membrane</keyword>
<keyword id="KW-0496">Mitochondrion</keyword>
<keyword id="KW-0999">Mitochondrion inner membrane</keyword>
<keyword id="KW-0520">NAD</keyword>
<keyword id="KW-0679">Respiratory chain</keyword>
<keyword id="KW-1278">Translocase</keyword>
<keyword id="KW-0812">Transmembrane</keyword>
<keyword id="KW-1133">Transmembrane helix</keyword>
<keyword id="KW-0813">Transport</keyword>
<keyword id="KW-0830">Ubiquinone</keyword>
<dbReference type="EC" id="7.1.1.2"/>
<dbReference type="EMBL" id="AJ554060">
    <property type="protein sequence ID" value="CAD88009.1"/>
    <property type="molecule type" value="Genomic_DNA"/>
</dbReference>
<dbReference type="RefSeq" id="NP_944732.1">
    <property type="nucleotide sequence ID" value="NC_005277.1"/>
</dbReference>
<dbReference type="SMR" id="Q70RR5"/>
<dbReference type="GeneID" id="2658751"/>
<dbReference type="CTD" id="4539"/>
<dbReference type="GO" id="GO:0005743">
    <property type="term" value="C:mitochondrial inner membrane"/>
    <property type="evidence" value="ECO:0000250"/>
    <property type="project" value="UniProtKB"/>
</dbReference>
<dbReference type="GO" id="GO:0045271">
    <property type="term" value="C:respiratory chain complex I"/>
    <property type="evidence" value="ECO:0000250"/>
    <property type="project" value="UniProtKB"/>
</dbReference>
<dbReference type="GO" id="GO:0008137">
    <property type="term" value="F:NADH dehydrogenase (ubiquinone) activity"/>
    <property type="evidence" value="ECO:0000250"/>
    <property type="project" value="UniProtKB"/>
</dbReference>
<dbReference type="GO" id="GO:0042773">
    <property type="term" value="P:ATP synthesis coupled electron transport"/>
    <property type="evidence" value="ECO:0007669"/>
    <property type="project" value="InterPro"/>
</dbReference>
<dbReference type="FunFam" id="1.10.287.3510:FF:000002">
    <property type="entry name" value="NADH-ubiquinone oxidoreductase chain 4L"/>
    <property type="match status" value="1"/>
</dbReference>
<dbReference type="Gene3D" id="1.10.287.3510">
    <property type="match status" value="1"/>
</dbReference>
<dbReference type="InterPro" id="IPR001133">
    <property type="entry name" value="NADH_UbQ_OxRdtase_chain4L/K"/>
</dbReference>
<dbReference type="InterPro" id="IPR039428">
    <property type="entry name" value="NUOK/Mnh_C1-like"/>
</dbReference>
<dbReference type="PANTHER" id="PTHR11434:SF0">
    <property type="entry name" value="NADH-UBIQUINONE OXIDOREDUCTASE CHAIN 4L"/>
    <property type="match status" value="1"/>
</dbReference>
<dbReference type="PANTHER" id="PTHR11434">
    <property type="entry name" value="NADH-UBIQUINONE OXIDOREDUCTASE SUBUNIT ND4L"/>
    <property type="match status" value="1"/>
</dbReference>
<dbReference type="Pfam" id="PF00420">
    <property type="entry name" value="Oxidored_q2"/>
    <property type="match status" value="1"/>
</dbReference>
<gene>
    <name type="primary">MT-ND4L</name>
    <name type="synonym">MTND4L</name>
    <name type="synonym">NADH4L</name>
    <name type="synonym">ND4L</name>
</gene>
<name>NU4LM_PONBL</name>
<evidence type="ECO:0000250" key="1">
    <source>
        <dbReference type="UniProtKB" id="P03901"/>
    </source>
</evidence>
<evidence type="ECO:0000250" key="2">
    <source>
        <dbReference type="UniProtKB" id="P03902"/>
    </source>
</evidence>
<evidence type="ECO:0000255" key="3"/>
<evidence type="ECO:0000305" key="4"/>
<comment type="function">
    <text evidence="1">Core subunit of the mitochondrial membrane respiratory chain NADH dehydrogenase (Complex I) which catalyzes electron transfer from NADH through the respiratory chain, using ubiquinone as an electron acceptor. Part of the enzyme membrane arm which is embedded in the lipid bilayer and involved in proton translocation.</text>
</comment>
<comment type="catalytic activity">
    <reaction evidence="1">
        <text>a ubiquinone + NADH + 5 H(+)(in) = a ubiquinol + NAD(+) + 4 H(+)(out)</text>
        <dbReference type="Rhea" id="RHEA:29091"/>
        <dbReference type="Rhea" id="RHEA-COMP:9565"/>
        <dbReference type="Rhea" id="RHEA-COMP:9566"/>
        <dbReference type="ChEBI" id="CHEBI:15378"/>
        <dbReference type="ChEBI" id="CHEBI:16389"/>
        <dbReference type="ChEBI" id="CHEBI:17976"/>
        <dbReference type="ChEBI" id="CHEBI:57540"/>
        <dbReference type="ChEBI" id="CHEBI:57945"/>
        <dbReference type="EC" id="7.1.1.2"/>
    </reaction>
    <physiologicalReaction direction="left-to-right" evidence="1">
        <dbReference type="Rhea" id="RHEA:29092"/>
    </physiologicalReaction>
</comment>
<comment type="subunit">
    <text evidence="2">Core subunit of respiratory chain NADH dehydrogenase (Complex I) which is composed of 45 different subunits.</text>
</comment>
<comment type="subcellular location">
    <subcellularLocation>
        <location evidence="2">Mitochondrion inner membrane</location>
        <topology evidence="3">Multi-pass membrane protein</topology>
    </subcellularLocation>
</comment>
<comment type="similarity">
    <text evidence="4">Belongs to the complex I subunit 4L family.</text>
</comment>
<proteinExistence type="inferred from homology"/>
<reference key="1">
    <citation type="journal article" date="2004" name="Gene">
        <title>Mitogenomic analyses provide new insights into cetacean origin and evolution.</title>
        <authorList>
            <person name="Arnason U."/>
            <person name="Gullberg A."/>
            <person name="Janke A."/>
        </authorList>
    </citation>
    <scope>NUCLEOTIDE SEQUENCE [GENOMIC DNA]</scope>
</reference>
<sequence>MTLVHMNLLLAFAMSLTGLLMYRSHLMSALLCLEGMVLSLFILATITTLNSHFTLANMMPIILLVFAACEAAIGLALLVKISNTYGTDHVQNLNLLQC</sequence>
<protein>
    <recommendedName>
        <fullName>NADH-ubiquinone oxidoreductase chain 4L</fullName>
        <ecNumber>7.1.1.2</ecNumber>
    </recommendedName>
    <alternativeName>
        <fullName>NADH dehydrogenase subunit 4L</fullName>
    </alternativeName>
</protein>
<feature type="chain" id="PRO_0000275106" description="NADH-ubiquinone oxidoreductase chain 4L">
    <location>
        <begin position="1"/>
        <end position="98"/>
    </location>
</feature>
<feature type="transmembrane region" description="Helical" evidence="3">
    <location>
        <begin position="1"/>
        <end position="21"/>
    </location>
</feature>
<feature type="transmembrane region" description="Helical" evidence="3">
    <location>
        <begin position="26"/>
        <end position="46"/>
    </location>
</feature>
<feature type="transmembrane region" description="Helical" evidence="3">
    <location>
        <begin position="59"/>
        <end position="79"/>
    </location>
</feature>
<organism>
    <name type="scientific">Pontoporia blainvillei</name>
    <name type="common">Franciscana</name>
    <name type="synonym">Delphinus blainvillei</name>
    <dbReference type="NCBI Taxonomy" id="48723"/>
    <lineage>
        <taxon>Eukaryota</taxon>
        <taxon>Metazoa</taxon>
        <taxon>Chordata</taxon>
        <taxon>Craniata</taxon>
        <taxon>Vertebrata</taxon>
        <taxon>Euteleostomi</taxon>
        <taxon>Mammalia</taxon>
        <taxon>Eutheria</taxon>
        <taxon>Laurasiatheria</taxon>
        <taxon>Artiodactyla</taxon>
        <taxon>Whippomorpha</taxon>
        <taxon>Cetacea</taxon>
        <taxon>Odontoceti</taxon>
        <taxon>Pontoporiidae</taxon>
        <taxon>Pontoporia</taxon>
    </lineage>
</organism>